<keyword id="KW-0002">3D-structure</keyword>
<keyword id="KW-0966">Cell projection</keyword>
<keyword id="KW-0969">Cilium</keyword>
<keyword id="KW-0963">Cytoplasm</keyword>
<keyword id="KW-0206">Cytoskeleton</keyword>
<keyword id="KW-0282">Flagellum</keyword>
<keyword id="KW-1185">Reference proteome</keyword>
<gene>
    <name evidence="7" type="primary">Cfap107</name>
</gene>
<comment type="function">
    <text evidence="3 4 5">Microtubule inner protein (MIP) part of the dynein-decorated doublet microtubules (DMTs) in cilia axoneme, which is required for motile cilia beating.</text>
</comment>
<comment type="subunit">
    <text evidence="3 4 5">Microtubule inner protein component of sperm flagellar doublet microtubules.</text>
</comment>
<comment type="subcellular location">
    <subcellularLocation>
        <location evidence="1">Cytoplasm</location>
        <location evidence="1">Cytoskeleton</location>
        <location evidence="1">Cilium axoneme</location>
    </subcellularLocation>
    <subcellularLocation>
        <location evidence="3 4 5">Cytoplasm</location>
        <location evidence="3 4 5">Cytoskeleton</location>
        <location evidence="3 4 5">Flagellum axoneme</location>
    </subcellularLocation>
</comment>
<comment type="sequence caution" evidence="6">
    <conflict type="erroneous initiation">
        <sequence resource="EMBL-CDS" id="AAH99569"/>
    </conflict>
    <text>Truncated N-terminus.</text>
</comment>
<comment type="sequence caution" evidence="6">
    <conflict type="erroneous initiation">
        <sequence resource="EMBL-CDS" id="AAI16373"/>
    </conflict>
    <text>Truncated N-terminus.</text>
</comment>
<comment type="sequence caution" evidence="6">
    <conflict type="erroneous initiation">
        <sequence resource="EMBL-CDS" id="AAI26972"/>
    </conflict>
    <text>Truncated N-terminus.</text>
</comment>
<evidence type="ECO:0000250" key="1">
    <source>
        <dbReference type="UniProtKB" id="Q2TA11"/>
    </source>
</evidence>
<evidence type="ECO:0000250" key="2">
    <source>
        <dbReference type="UniProtKB" id="Q8N1D5"/>
    </source>
</evidence>
<evidence type="ECO:0000269" key="3">
    <source>
    </source>
</evidence>
<evidence type="ECO:0000269" key="4">
    <source>
    </source>
</evidence>
<evidence type="ECO:0000269" key="5">
    <source>
    </source>
</evidence>
<evidence type="ECO:0000305" key="6"/>
<evidence type="ECO:0000312" key="7">
    <source>
        <dbReference type="MGI" id="MGI:1916614"/>
    </source>
</evidence>
<evidence type="ECO:0007744" key="8">
    <source>
        <dbReference type="PDB" id="8I7R"/>
    </source>
</evidence>
<evidence type="ECO:0007744" key="9">
    <source>
        <dbReference type="PDB" id="8IYJ"/>
    </source>
</evidence>
<evidence type="ECO:0007744" key="10">
    <source>
        <dbReference type="PDB" id="8TO0"/>
    </source>
</evidence>
<organism>
    <name type="scientific">Mus musculus</name>
    <name type="common">Mouse</name>
    <dbReference type="NCBI Taxonomy" id="10090"/>
    <lineage>
        <taxon>Eukaryota</taxon>
        <taxon>Metazoa</taxon>
        <taxon>Chordata</taxon>
        <taxon>Craniata</taxon>
        <taxon>Vertebrata</taxon>
        <taxon>Euteleostomi</taxon>
        <taxon>Mammalia</taxon>
        <taxon>Eutheria</taxon>
        <taxon>Euarchontoglires</taxon>
        <taxon>Glires</taxon>
        <taxon>Rodentia</taxon>
        <taxon>Myomorpha</taxon>
        <taxon>Muroidea</taxon>
        <taxon>Muridae</taxon>
        <taxon>Murinae</taxon>
        <taxon>Mus</taxon>
        <taxon>Mus</taxon>
    </lineage>
</organism>
<proteinExistence type="evidence at protein level"/>
<feature type="chain" id="PRO_0000247261" description="Cilia- and flagella-associated protein 107">
    <location>
        <begin position="1"/>
        <end position="196"/>
    </location>
</feature>
<feature type="region of interest" description="Mn 1" evidence="2">
    <location>
        <begin position="47"/>
        <end position="62"/>
    </location>
</feature>
<feature type="region of interest" description="Mn 2" evidence="2">
    <location>
        <begin position="97"/>
        <end position="109"/>
    </location>
</feature>
<dbReference type="EMBL" id="AK005933">
    <property type="protein sequence ID" value="BAB24324.1"/>
    <property type="molecule type" value="mRNA"/>
</dbReference>
<dbReference type="EMBL" id="AL607073">
    <property type="status" value="NOT_ANNOTATED_CDS"/>
    <property type="molecule type" value="Genomic_DNA"/>
</dbReference>
<dbReference type="EMBL" id="CH466657">
    <property type="protein sequence ID" value="EDL29713.1"/>
    <property type="molecule type" value="Genomic_DNA"/>
</dbReference>
<dbReference type="EMBL" id="BC099569">
    <property type="protein sequence ID" value="AAH99569.1"/>
    <property type="status" value="ALT_INIT"/>
    <property type="molecule type" value="mRNA"/>
</dbReference>
<dbReference type="EMBL" id="BC116372">
    <property type="protein sequence ID" value="AAI16373.1"/>
    <property type="status" value="ALT_INIT"/>
    <property type="molecule type" value="mRNA"/>
</dbReference>
<dbReference type="EMBL" id="BC126971">
    <property type="protein sequence ID" value="AAI26972.1"/>
    <property type="status" value="ALT_INIT"/>
    <property type="molecule type" value="mRNA"/>
</dbReference>
<dbReference type="CCDS" id="CCDS51365.1"/>
<dbReference type="RefSeq" id="NP_081332.1">
    <property type="nucleotide sequence ID" value="NM_027056.1"/>
</dbReference>
<dbReference type="PDB" id="8I7R">
    <property type="method" value="EM"/>
    <property type="resolution" value="6.50 A"/>
    <property type="chains" value="J=1-196"/>
</dbReference>
<dbReference type="PDB" id="8IYJ">
    <property type="method" value="EM"/>
    <property type="resolution" value="3.50 A"/>
    <property type="chains" value="8=1-196"/>
</dbReference>
<dbReference type="PDB" id="8TO0">
    <property type="method" value="EM"/>
    <property type="resolution" value="7.70 A"/>
    <property type="chains" value="8/9=1-196"/>
</dbReference>
<dbReference type="PDBsum" id="8I7R"/>
<dbReference type="PDBsum" id="8IYJ"/>
<dbReference type="PDBsum" id="8TO0"/>
<dbReference type="EMDB" id="EMD-35230"/>
<dbReference type="EMDB" id="EMD-35823"/>
<dbReference type="EMDB" id="EMD-41431"/>
<dbReference type="SMR" id="Q4KKZ1"/>
<dbReference type="FunCoup" id="Q4KKZ1">
    <property type="interactions" value="2"/>
</dbReference>
<dbReference type="STRING" id="10090.ENSMUSP00000030323"/>
<dbReference type="PhosphoSitePlus" id="Q4KKZ1"/>
<dbReference type="PaxDb" id="10090-ENSMUSP00000030323"/>
<dbReference type="Antibodypedia" id="28545">
    <property type="antibodies" value="39 antibodies from 11 providers"/>
</dbReference>
<dbReference type="Ensembl" id="ENSMUST00000030323.3">
    <property type="protein sequence ID" value="ENSMUSP00000030323.3"/>
    <property type="gene ID" value="ENSMUSG00000028589.3"/>
</dbReference>
<dbReference type="GeneID" id="69364"/>
<dbReference type="KEGG" id="mmu:69364"/>
<dbReference type="UCSC" id="uc008vrf.1">
    <property type="organism name" value="mouse"/>
</dbReference>
<dbReference type="AGR" id="MGI:1916614"/>
<dbReference type="CTD" id="93190"/>
<dbReference type="MGI" id="MGI:1916614">
    <property type="gene designation" value="Cfap107"/>
</dbReference>
<dbReference type="VEuPathDB" id="HostDB:ENSMUSG00000028589"/>
<dbReference type="eggNOG" id="ENOG502RZRC">
    <property type="taxonomic scope" value="Eukaryota"/>
</dbReference>
<dbReference type="GeneTree" id="ENSGT00390000014553"/>
<dbReference type="HOGENOM" id="CLU_100733_1_0_1"/>
<dbReference type="InParanoid" id="Q4KKZ1"/>
<dbReference type="OMA" id="EKTPQCI"/>
<dbReference type="OrthoDB" id="8185227at2759"/>
<dbReference type="PhylomeDB" id="Q4KKZ1"/>
<dbReference type="TreeFam" id="TF328903"/>
<dbReference type="BioGRID-ORCS" id="69364">
    <property type="hits" value="0 hits in 76 CRISPR screens"/>
</dbReference>
<dbReference type="PRO" id="PR:Q4KKZ1"/>
<dbReference type="Proteomes" id="UP000000589">
    <property type="component" value="Chromosome 4"/>
</dbReference>
<dbReference type="RNAct" id="Q4KKZ1">
    <property type="molecule type" value="protein"/>
</dbReference>
<dbReference type="Bgee" id="ENSMUSG00000028589">
    <property type="expression patterns" value="Expressed in seminiferous tubule of testis and 17 other cell types or tissues"/>
</dbReference>
<dbReference type="GO" id="GO:0160111">
    <property type="term" value="C:axonemal A tubule inner sheath"/>
    <property type="evidence" value="ECO:0000314"/>
    <property type="project" value="UniProtKB"/>
</dbReference>
<dbReference type="GO" id="GO:0005879">
    <property type="term" value="C:axonemal microtubule"/>
    <property type="evidence" value="ECO:0000250"/>
    <property type="project" value="UniProtKB"/>
</dbReference>
<dbReference type="GO" id="GO:0036126">
    <property type="term" value="C:sperm flagellum"/>
    <property type="evidence" value="ECO:0000314"/>
    <property type="project" value="UniProtKB"/>
</dbReference>
<dbReference type="GO" id="GO:0030317">
    <property type="term" value="P:flagellated sperm motility"/>
    <property type="evidence" value="ECO:0000314"/>
    <property type="project" value="UniProtKB"/>
</dbReference>
<dbReference type="InterPro" id="IPR054709">
    <property type="entry name" value="CFAP107"/>
</dbReference>
<dbReference type="InterPro" id="IPR037662">
    <property type="entry name" value="CFAP68/107"/>
</dbReference>
<dbReference type="PANTHER" id="PTHR31180:SF2">
    <property type="entry name" value="CILIA- AND FLAGELLA-ASSOCIATED PROTEIN 107"/>
    <property type="match status" value="1"/>
</dbReference>
<dbReference type="PANTHER" id="PTHR31180">
    <property type="entry name" value="CILIA- AND FLAGELLA-ASSOCIATED PROTEIN 107-RELATED"/>
    <property type="match status" value="1"/>
</dbReference>
<dbReference type="Pfam" id="PF22595">
    <property type="entry name" value="CFAP107"/>
    <property type="match status" value="1"/>
</dbReference>
<accession>Q4KKZ1</accession>
<accession>A2A7Z7</accession>
<accession>Q08EE4</accession>
<accession>Q9DAD4</accession>
<protein>
    <recommendedName>
        <fullName evidence="7">Cilia- and flagella-associated protein 107</fullName>
    </recommendedName>
</protein>
<reference key="1">
    <citation type="journal article" date="2005" name="Science">
        <title>The transcriptional landscape of the mammalian genome.</title>
        <authorList>
            <person name="Carninci P."/>
            <person name="Kasukawa T."/>
            <person name="Katayama S."/>
            <person name="Gough J."/>
            <person name="Frith M.C."/>
            <person name="Maeda N."/>
            <person name="Oyama R."/>
            <person name="Ravasi T."/>
            <person name="Lenhard B."/>
            <person name="Wells C."/>
            <person name="Kodzius R."/>
            <person name="Shimokawa K."/>
            <person name="Bajic V.B."/>
            <person name="Brenner S.E."/>
            <person name="Batalov S."/>
            <person name="Forrest A.R."/>
            <person name="Zavolan M."/>
            <person name="Davis M.J."/>
            <person name="Wilming L.G."/>
            <person name="Aidinis V."/>
            <person name="Allen J.E."/>
            <person name="Ambesi-Impiombato A."/>
            <person name="Apweiler R."/>
            <person name="Aturaliya R.N."/>
            <person name="Bailey T.L."/>
            <person name="Bansal M."/>
            <person name="Baxter L."/>
            <person name="Beisel K.W."/>
            <person name="Bersano T."/>
            <person name="Bono H."/>
            <person name="Chalk A.M."/>
            <person name="Chiu K.P."/>
            <person name="Choudhary V."/>
            <person name="Christoffels A."/>
            <person name="Clutterbuck D.R."/>
            <person name="Crowe M.L."/>
            <person name="Dalla E."/>
            <person name="Dalrymple B.P."/>
            <person name="de Bono B."/>
            <person name="Della Gatta G."/>
            <person name="di Bernardo D."/>
            <person name="Down T."/>
            <person name="Engstrom P."/>
            <person name="Fagiolini M."/>
            <person name="Faulkner G."/>
            <person name="Fletcher C.F."/>
            <person name="Fukushima T."/>
            <person name="Furuno M."/>
            <person name="Futaki S."/>
            <person name="Gariboldi M."/>
            <person name="Georgii-Hemming P."/>
            <person name="Gingeras T.R."/>
            <person name="Gojobori T."/>
            <person name="Green R.E."/>
            <person name="Gustincich S."/>
            <person name="Harbers M."/>
            <person name="Hayashi Y."/>
            <person name="Hensch T.K."/>
            <person name="Hirokawa N."/>
            <person name="Hill D."/>
            <person name="Huminiecki L."/>
            <person name="Iacono M."/>
            <person name="Ikeo K."/>
            <person name="Iwama A."/>
            <person name="Ishikawa T."/>
            <person name="Jakt M."/>
            <person name="Kanapin A."/>
            <person name="Katoh M."/>
            <person name="Kawasawa Y."/>
            <person name="Kelso J."/>
            <person name="Kitamura H."/>
            <person name="Kitano H."/>
            <person name="Kollias G."/>
            <person name="Krishnan S.P."/>
            <person name="Kruger A."/>
            <person name="Kummerfeld S.K."/>
            <person name="Kurochkin I.V."/>
            <person name="Lareau L.F."/>
            <person name="Lazarevic D."/>
            <person name="Lipovich L."/>
            <person name="Liu J."/>
            <person name="Liuni S."/>
            <person name="McWilliam S."/>
            <person name="Madan Babu M."/>
            <person name="Madera M."/>
            <person name="Marchionni L."/>
            <person name="Matsuda H."/>
            <person name="Matsuzawa S."/>
            <person name="Miki H."/>
            <person name="Mignone F."/>
            <person name="Miyake S."/>
            <person name="Morris K."/>
            <person name="Mottagui-Tabar S."/>
            <person name="Mulder N."/>
            <person name="Nakano N."/>
            <person name="Nakauchi H."/>
            <person name="Ng P."/>
            <person name="Nilsson R."/>
            <person name="Nishiguchi S."/>
            <person name="Nishikawa S."/>
            <person name="Nori F."/>
            <person name="Ohara O."/>
            <person name="Okazaki Y."/>
            <person name="Orlando V."/>
            <person name="Pang K.C."/>
            <person name="Pavan W.J."/>
            <person name="Pavesi G."/>
            <person name="Pesole G."/>
            <person name="Petrovsky N."/>
            <person name="Piazza S."/>
            <person name="Reed J."/>
            <person name="Reid J.F."/>
            <person name="Ring B.Z."/>
            <person name="Ringwald M."/>
            <person name="Rost B."/>
            <person name="Ruan Y."/>
            <person name="Salzberg S.L."/>
            <person name="Sandelin A."/>
            <person name="Schneider C."/>
            <person name="Schoenbach C."/>
            <person name="Sekiguchi K."/>
            <person name="Semple C.A."/>
            <person name="Seno S."/>
            <person name="Sessa L."/>
            <person name="Sheng Y."/>
            <person name="Shibata Y."/>
            <person name="Shimada H."/>
            <person name="Shimada K."/>
            <person name="Silva D."/>
            <person name="Sinclair B."/>
            <person name="Sperling S."/>
            <person name="Stupka E."/>
            <person name="Sugiura K."/>
            <person name="Sultana R."/>
            <person name="Takenaka Y."/>
            <person name="Taki K."/>
            <person name="Tammoja K."/>
            <person name="Tan S.L."/>
            <person name="Tang S."/>
            <person name="Taylor M.S."/>
            <person name="Tegner J."/>
            <person name="Teichmann S.A."/>
            <person name="Ueda H.R."/>
            <person name="van Nimwegen E."/>
            <person name="Verardo R."/>
            <person name="Wei C.L."/>
            <person name="Yagi K."/>
            <person name="Yamanishi H."/>
            <person name="Zabarovsky E."/>
            <person name="Zhu S."/>
            <person name="Zimmer A."/>
            <person name="Hide W."/>
            <person name="Bult C."/>
            <person name="Grimmond S.M."/>
            <person name="Teasdale R.D."/>
            <person name="Liu E.T."/>
            <person name="Brusic V."/>
            <person name="Quackenbush J."/>
            <person name="Wahlestedt C."/>
            <person name="Mattick J.S."/>
            <person name="Hume D.A."/>
            <person name="Kai C."/>
            <person name="Sasaki D."/>
            <person name="Tomaru Y."/>
            <person name="Fukuda S."/>
            <person name="Kanamori-Katayama M."/>
            <person name="Suzuki M."/>
            <person name="Aoki J."/>
            <person name="Arakawa T."/>
            <person name="Iida J."/>
            <person name="Imamura K."/>
            <person name="Itoh M."/>
            <person name="Kato T."/>
            <person name="Kawaji H."/>
            <person name="Kawagashira N."/>
            <person name="Kawashima T."/>
            <person name="Kojima M."/>
            <person name="Kondo S."/>
            <person name="Konno H."/>
            <person name="Nakano K."/>
            <person name="Ninomiya N."/>
            <person name="Nishio T."/>
            <person name="Okada M."/>
            <person name="Plessy C."/>
            <person name="Shibata K."/>
            <person name="Shiraki T."/>
            <person name="Suzuki S."/>
            <person name="Tagami M."/>
            <person name="Waki K."/>
            <person name="Watahiki A."/>
            <person name="Okamura-Oho Y."/>
            <person name="Suzuki H."/>
            <person name="Kawai J."/>
            <person name="Hayashizaki Y."/>
        </authorList>
    </citation>
    <scope>NUCLEOTIDE SEQUENCE [LARGE SCALE MRNA]</scope>
    <source>
        <strain>C57BL/6J</strain>
        <tissue>Testis</tissue>
    </source>
</reference>
<reference key="2">
    <citation type="journal article" date="2009" name="PLoS Biol.">
        <title>Lineage-specific biology revealed by a finished genome assembly of the mouse.</title>
        <authorList>
            <person name="Church D.M."/>
            <person name="Goodstadt L."/>
            <person name="Hillier L.W."/>
            <person name="Zody M.C."/>
            <person name="Goldstein S."/>
            <person name="She X."/>
            <person name="Bult C.J."/>
            <person name="Agarwala R."/>
            <person name="Cherry J.L."/>
            <person name="DiCuccio M."/>
            <person name="Hlavina W."/>
            <person name="Kapustin Y."/>
            <person name="Meric P."/>
            <person name="Maglott D."/>
            <person name="Birtle Z."/>
            <person name="Marques A.C."/>
            <person name="Graves T."/>
            <person name="Zhou S."/>
            <person name="Teague B."/>
            <person name="Potamousis K."/>
            <person name="Churas C."/>
            <person name="Place M."/>
            <person name="Herschleb J."/>
            <person name="Runnheim R."/>
            <person name="Forrest D."/>
            <person name="Amos-Landgraf J."/>
            <person name="Schwartz D.C."/>
            <person name="Cheng Z."/>
            <person name="Lindblad-Toh K."/>
            <person name="Eichler E.E."/>
            <person name="Ponting C.P."/>
        </authorList>
    </citation>
    <scope>NUCLEOTIDE SEQUENCE [LARGE SCALE GENOMIC DNA]</scope>
    <source>
        <strain>C57BL/6J</strain>
    </source>
</reference>
<reference key="3">
    <citation type="submission" date="2005-07" db="EMBL/GenBank/DDBJ databases">
        <authorList>
            <person name="Mural R.J."/>
            <person name="Adams M.D."/>
            <person name="Myers E.W."/>
            <person name="Smith H.O."/>
            <person name="Venter J.C."/>
        </authorList>
    </citation>
    <scope>NUCLEOTIDE SEQUENCE [LARGE SCALE GENOMIC DNA]</scope>
</reference>
<reference key="4">
    <citation type="journal article" date="2004" name="Genome Res.">
        <title>The status, quality, and expansion of the NIH full-length cDNA project: the Mammalian Gene Collection (MGC).</title>
        <authorList>
            <consortium name="The MGC Project Team"/>
        </authorList>
    </citation>
    <scope>NUCLEOTIDE SEQUENCE [LARGE SCALE MRNA]</scope>
    <source>
        <tissue>Testis</tissue>
    </source>
</reference>
<reference evidence="9" key="5">
    <citation type="journal article" date="2023" name="Cell">
        <title>Structures of sperm flagellar doublet microtubules expand the genetic spectrum of male infertility.</title>
        <authorList>
            <person name="Zhou L."/>
            <person name="Liu H."/>
            <person name="Liu S."/>
            <person name="Yang X."/>
            <person name="Dong Y."/>
            <person name="Pan Y."/>
            <person name="Xiao Z."/>
            <person name="Zheng B."/>
            <person name="Sun Y."/>
            <person name="Huang P."/>
            <person name="Zhang X."/>
            <person name="Hu J."/>
            <person name="Sun R."/>
            <person name="Feng S."/>
            <person name="Zhu Y."/>
            <person name="Liu M."/>
            <person name="Gui M."/>
            <person name="Wu J."/>
        </authorList>
    </citation>
    <scope>STRUCTURE BY ELECTRON MICROSCOPY (3.50 ANGSTROMS) OF SPERM FLAGELLAR DOUBLET MICROTUBULES</scope>
    <scope>FUNCTION</scope>
    <scope>SUBCELLULAR LOCATION</scope>
    <scope>SUBUNIT</scope>
</reference>
<reference evidence="10" key="6">
    <citation type="journal article" date="2023" name="Cell">
        <title>De novo protein identification in mammalian sperm using in situ cryoelectron tomography and AlphaFold2 docking.</title>
        <authorList>
            <person name="Chen Z."/>
            <person name="Shiozaki M."/>
            <person name="Haas K.M."/>
            <person name="Skinner W.M."/>
            <person name="Zhao S."/>
            <person name="Guo C."/>
            <person name="Polacco B.J."/>
            <person name="Yu Z."/>
            <person name="Krogan N.J."/>
            <person name="Lishko P.V."/>
            <person name="Kaake R.M."/>
            <person name="Vale R.D."/>
            <person name="Agard D.A."/>
        </authorList>
    </citation>
    <scope>STRUCTURE BY ELECTRON MICROSCOPY (7.70 ANGSTROMS) OF SPERM FLAGELLAR DOUBLET MICROTUBULES</scope>
    <scope>FUNCTION</scope>
    <scope>SUBCELLULAR LOCATION</scope>
    <scope>SUBUNIT</scope>
</reference>
<reference evidence="8" key="7">
    <citation type="journal article" date="2023" name="Cell Discov.">
        <title>In-cell structural insight into the stability of sperm microtubule doublet.</title>
        <authorList>
            <person name="Tai L."/>
            <person name="Yin G."/>
            <person name="Huang X."/>
            <person name="Sun F."/>
            <person name="Zhu Y."/>
        </authorList>
    </citation>
    <scope>STRUCTURE BY ELECTRON MICROSCOPY (4.50 ANGSTROMS)</scope>
    <scope>FUNCTION</scope>
    <scope>SUBUNIT</scope>
    <scope>SUBCELLULAR LOCATION</scope>
</reference>
<sequence>MAMLSTSVVPEAFSTPGWQIEKKYSTKVLLGNWVEERGKFTKAIDHTPQCIYRKEYVPMPDHRPDFVSRWYSKSKMEGLPYKHLITHHQEPSHRYLISTYDDHYNRHNYNPGLPALRTWNGQKLLWLPEKSDFPLVAPPTNYGLLEQLQQKWLASKTSLKESIYTTSYPRLPVCAMSRREHAIPVPHPRLQPIPRF</sequence>
<name>CF107_MOUSE</name>